<feature type="initiator methionine" description="Removed" evidence="1">
    <location>
        <position position="1"/>
    </location>
</feature>
<feature type="chain" id="PRO_0000180223" description="Acyl carrier protein">
    <location>
        <begin position="2"/>
        <end position="79"/>
    </location>
</feature>
<feature type="domain" description="Carrier" evidence="3">
    <location>
        <begin position="2"/>
        <end position="77"/>
    </location>
</feature>
<feature type="modified residue" description="O-(pantetheine 4'-phosphoryl)serine" evidence="3">
    <location>
        <position position="37"/>
    </location>
</feature>
<gene>
    <name evidence="2" type="primary">acpP</name>
    <name type="ordered locus">XCC1019</name>
</gene>
<dbReference type="EMBL" id="AE008922">
    <property type="protein sequence ID" value="AAM40319.1"/>
    <property type="molecule type" value="Genomic_DNA"/>
</dbReference>
<dbReference type="RefSeq" id="NP_636395.1">
    <property type="nucleotide sequence ID" value="NC_003902.1"/>
</dbReference>
<dbReference type="RefSeq" id="WP_002814322.1">
    <property type="nucleotide sequence ID" value="NC_003902.1"/>
</dbReference>
<dbReference type="SMR" id="P63447"/>
<dbReference type="STRING" id="190485.XCC1019"/>
<dbReference type="EnsemblBacteria" id="AAM40319">
    <property type="protein sequence ID" value="AAM40319"/>
    <property type="gene ID" value="XCC1019"/>
</dbReference>
<dbReference type="GeneID" id="97509460"/>
<dbReference type="KEGG" id="xcc:XCC1019"/>
<dbReference type="PATRIC" id="fig|190485.4.peg.1084"/>
<dbReference type="eggNOG" id="COG0236">
    <property type="taxonomic scope" value="Bacteria"/>
</dbReference>
<dbReference type="HOGENOM" id="CLU_108696_5_1_6"/>
<dbReference type="OrthoDB" id="9804551at2"/>
<dbReference type="UniPathway" id="UPA00094"/>
<dbReference type="PRO" id="PR:P63447"/>
<dbReference type="Proteomes" id="UP000001010">
    <property type="component" value="Chromosome"/>
</dbReference>
<dbReference type="GO" id="GO:0005829">
    <property type="term" value="C:cytosol"/>
    <property type="evidence" value="ECO:0000318"/>
    <property type="project" value="GO_Central"/>
</dbReference>
<dbReference type="GO" id="GO:0016020">
    <property type="term" value="C:membrane"/>
    <property type="evidence" value="ECO:0007669"/>
    <property type="project" value="GOC"/>
</dbReference>
<dbReference type="GO" id="GO:0000035">
    <property type="term" value="F:acyl binding"/>
    <property type="evidence" value="ECO:0000318"/>
    <property type="project" value="GO_Central"/>
</dbReference>
<dbReference type="GO" id="GO:0000036">
    <property type="term" value="F:acyl carrier activity"/>
    <property type="evidence" value="ECO:0000318"/>
    <property type="project" value="GO_Central"/>
</dbReference>
<dbReference type="GO" id="GO:0009245">
    <property type="term" value="P:lipid A biosynthetic process"/>
    <property type="evidence" value="ECO:0000318"/>
    <property type="project" value="GO_Central"/>
</dbReference>
<dbReference type="FunFam" id="1.10.1200.10:FF:000001">
    <property type="entry name" value="Acyl carrier protein"/>
    <property type="match status" value="1"/>
</dbReference>
<dbReference type="Gene3D" id="1.10.1200.10">
    <property type="entry name" value="ACP-like"/>
    <property type="match status" value="1"/>
</dbReference>
<dbReference type="HAMAP" id="MF_01217">
    <property type="entry name" value="Acyl_carrier"/>
    <property type="match status" value="1"/>
</dbReference>
<dbReference type="InterPro" id="IPR003231">
    <property type="entry name" value="ACP"/>
</dbReference>
<dbReference type="InterPro" id="IPR036736">
    <property type="entry name" value="ACP-like_sf"/>
</dbReference>
<dbReference type="InterPro" id="IPR009081">
    <property type="entry name" value="PP-bd_ACP"/>
</dbReference>
<dbReference type="InterPro" id="IPR006162">
    <property type="entry name" value="Ppantetheine_attach_site"/>
</dbReference>
<dbReference type="NCBIfam" id="TIGR00517">
    <property type="entry name" value="acyl_carrier"/>
    <property type="match status" value="1"/>
</dbReference>
<dbReference type="NCBIfam" id="NF002148">
    <property type="entry name" value="PRK00982.1-2"/>
    <property type="match status" value="1"/>
</dbReference>
<dbReference type="NCBIfam" id="NF002149">
    <property type="entry name" value="PRK00982.1-3"/>
    <property type="match status" value="1"/>
</dbReference>
<dbReference type="NCBIfam" id="NF002150">
    <property type="entry name" value="PRK00982.1-4"/>
    <property type="match status" value="1"/>
</dbReference>
<dbReference type="NCBIfam" id="NF002151">
    <property type="entry name" value="PRK00982.1-5"/>
    <property type="match status" value="1"/>
</dbReference>
<dbReference type="PANTHER" id="PTHR20863">
    <property type="entry name" value="ACYL CARRIER PROTEIN"/>
    <property type="match status" value="1"/>
</dbReference>
<dbReference type="PANTHER" id="PTHR20863:SF76">
    <property type="entry name" value="CARRIER DOMAIN-CONTAINING PROTEIN"/>
    <property type="match status" value="1"/>
</dbReference>
<dbReference type="Pfam" id="PF00550">
    <property type="entry name" value="PP-binding"/>
    <property type="match status" value="1"/>
</dbReference>
<dbReference type="SUPFAM" id="SSF47336">
    <property type="entry name" value="ACP-like"/>
    <property type="match status" value="1"/>
</dbReference>
<dbReference type="PROSITE" id="PS50075">
    <property type="entry name" value="CARRIER"/>
    <property type="match status" value="1"/>
</dbReference>
<dbReference type="PROSITE" id="PS00012">
    <property type="entry name" value="PHOSPHOPANTETHEINE"/>
    <property type="match status" value="1"/>
</dbReference>
<keyword id="KW-0963">Cytoplasm</keyword>
<keyword id="KW-0275">Fatty acid biosynthesis</keyword>
<keyword id="KW-0276">Fatty acid metabolism</keyword>
<keyword id="KW-0444">Lipid biosynthesis</keyword>
<keyword id="KW-0443">Lipid metabolism</keyword>
<keyword id="KW-0596">Phosphopantetheine</keyword>
<keyword id="KW-0597">Phosphoprotein</keyword>
<keyword id="KW-1185">Reference proteome</keyword>
<organism>
    <name type="scientific">Xanthomonas campestris pv. campestris (strain ATCC 33913 / DSM 3586 / NCPPB 528 / LMG 568 / P 25)</name>
    <dbReference type="NCBI Taxonomy" id="190485"/>
    <lineage>
        <taxon>Bacteria</taxon>
        <taxon>Pseudomonadati</taxon>
        <taxon>Pseudomonadota</taxon>
        <taxon>Gammaproteobacteria</taxon>
        <taxon>Lysobacterales</taxon>
        <taxon>Lysobacteraceae</taxon>
        <taxon>Xanthomonas</taxon>
    </lineage>
</organism>
<evidence type="ECO:0000250" key="1"/>
<evidence type="ECO:0000255" key="2">
    <source>
        <dbReference type="HAMAP-Rule" id="MF_01217"/>
    </source>
</evidence>
<evidence type="ECO:0000255" key="3">
    <source>
        <dbReference type="PROSITE-ProRule" id="PRU00258"/>
    </source>
</evidence>
<accession>P63447</accession>
<accession>P58986</accession>
<name>ACP_XANCP</name>
<protein>
    <recommendedName>
        <fullName evidence="2">Acyl carrier protein</fullName>
        <shortName evidence="2">ACP</shortName>
    </recommendedName>
</protein>
<comment type="function">
    <text evidence="2">Carrier of the growing fatty acid chain in fatty acid biosynthesis.</text>
</comment>
<comment type="pathway">
    <text evidence="2">Lipid metabolism; fatty acid biosynthesis.</text>
</comment>
<comment type="subcellular location">
    <subcellularLocation>
        <location evidence="2">Cytoplasm</location>
    </subcellularLocation>
</comment>
<comment type="PTM">
    <text evidence="2">4'-phosphopantetheine is transferred from CoA to a specific serine of apo-ACP by AcpS. This modification is essential for activity because fatty acids are bound in thioester linkage to the sulfhydryl of the prosthetic group.</text>
</comment>
<comment type="similarity">
    <text evidence="2">Belongs to the acyl carrier protein (ACP) family.</text>
</comment>
<reference key="1">
    <citation type="journal article" date="2002" name="Nature">
        <title>Comparison of the genomes of two Xanthomonas pathogens with differing host specificities.</title>
        <authorList>
            <person name="da Silva A.C.R."/>
            <person name="Ferro J.A."/>
            <person name="Reinach F.C."/>
            <person name="Farah C.S."/>
            <person name="Furlan L.R."/>
            <person name="Quaggio R.B."/>
            <person name="Monteiro-Vitorello C.B."/>
            <person name="Van Sluys M.A."/>
            <person name="Almeida N.F. Jr."/>
            <person name="Alves L.M.C."/>
            <person name="do Amaral A.M."/>
            <person name="Bertolini M.C."/>
            <person name="Camargo L.E.A."/>
            <person name="Camarotte G."/>
            <person name="Cannavan F."/>
            <person name="Cardozo J."/>
            <person name="Chambergo F."/>
            <person name="Ciapina L.P."/>
            <person name="Cicarelli R.M.B."/>
            <person name="Coutinho L.L."/>
            <person name="Cursino-Santos J.R."/>
            <person name="El-Dorry H."/>
            <person name="Faria J.B."/>
            <person name="Ferreira A.J.S."/>
            <person name="Ferreira R.C.C."/>
            <person name="Ferro M.I.T."/>
            <person name="Formighieri E.F."/>
            <person name="Franco M.C."/>
            <person name="Greggio C.C."/>
            <person name="Gruber A."/>
            <person name="Katsuyama A.M."/>
            <person name="Kishi L.T."/>
            <person name="Leite R.P."/>
            <person name="Lemos E.G.M."/>
            <person name="Lemos M.V.F."/>
            <person name="Locali E.C."/>
            <person name="Machado M.A."/>
            <person name="Madeira A.M.B.N."/>
            <person name="Martinez-Rossi N.M."/>
            <person name="Martins E.C."/>
            <person name="Meidanis J."/>
            <person name="Menck C.F.M."/>
            <person name="Miyaki C.Y."/>
            <person name="Moon D.H."/>
            <person name="Moreira L.M."/>
            <person name="Novo M.T.M."/>
            <person name="Okura V.K."/>
            <person name="Oliveira M.C."/>
            <person name="Oliveira V.R."/>
            <person name="Pereira H.A."/>
            <person name="Rossi A."/>
            <person name="Sena J.A.D."/>
            <person name="Silva C."/>
            <person name="de Souza R.F."/>
            <person name="Spinola L.A.F."/>
            <person name="Takita M.A."/>
            <person name="Tamura R.E."/>
            <person name="Teixeira E.C."/>
            <person name="Tezza R.I.D."/>
            <person name="Trindade dos Santos M."/>
            <person name="Truffi D."/>
            <person name="Tsai S.M."/>
            <person name="White F.F."/>
            <person name="Setubal J.C."/>
            <person name="Kitajima J.P."/>
        </authorList>
    </citation>
    <scope>NUCLEOTIDE SEQUENCE [LARGE SCALE GENOMIC DNA]</scope>
    <source>
        <strain>ATCC 33913 / DSM 3586 / NCPPB 528 / LMG 568 / P 25</strain>
    </source>
</reference>
<proteinExistence type="inferred from homology"/>
<sequence length="79" mass="8803">MSTIEERVKKIVVEQLGVKEEEVTTSASFVDDLGADSLDTVELVMALEEEFECEIPDEEAEKITSVQQAIDYVKAHVKS</sequence>